<dbReference type="EMBL" id="AL049656">
    <property type="protein sequence ID" value="CAB41115.1"/>
    <property type="molecule type" value="Genomic_DNA"/>
</dbReference>
<dbReference type="EMBL" id="AL161536">
    <property type="protein sequence ID" value="CAB78399.1"/>
    <property type="molecule type" value="Genomic_DNA"/>
</dbReference>
<dbReference type="EMBL" id="CP002687">
    <property type="protein sequence ID" value="AEE83294.1"/>
    <property type="molecule type" value="Genomic_DNA"/>
</dbReference>
<dbReference type="PIR" id="T06659">
    <property type="entry name" value="T06659"/>
</dbReference>
<dbReference type="RefSeq" id="NP_193093.1">
    <molecule id="Q9T0H7-1"/>
    <property type="nucleotide sequence ID" value="NM_117431.1"/>
</dbReference>
<dbReference type="SMR" id="Q9T0H7"/>
<dbReference type="FunCoup" id="Q9T0H7">
    <property type="interactions" value="7"/>
</dbReference>
<dbReference type="STRING" id="3702.Q9T0H7"/>
<dbReference type="EnsemblPlants" id="AT4G13570.1">
    <molecule id="Q9T0H7-1"/>
    <property type="protein sequence ID" value="AT4G13570.1"/>
    <property type="gene ID" value="AT4G13570"/>
</dbReference>
<dbReference type="GeneID" id="826990"/>
<dbReference type="Gramene" id="AT4G13570.1">
    <molecule id="Q9T0H7-1"/>
    <property type="protein sequence ID" value="AT4G13570.1"/>
    <property type="gene ID" value="AT4G13570"/>
</dbReference>
<dbReference type="KEGG" id="ath:AT4G13570"/>
<dbReference type="Araport" id="AT4G13570"/>
<dbReference type="TAIR" id="AT4G13570">
    <property type="gene designation" value="HTA4"/>
</dbReference>
<dbReference type="HOGENOM" id="CLU_062828_2_2_1"/>
<dbReference type="InParanoid" id="Q9T0H7"/>
<dbReference type="PhylomeDB" id="Q9T0H7"/>
<dbReference type="PRO" id="PR:Q9T0H7"/>
<dbReference type="Proteomes" id="UP000006548">
    <property type="component" value="Chromosome 4"/>
</dbReference>
<dbReference type="ExpressionAtlas" id="Q9T0H7">
    <property type="expression patterns" value="baseline and differential"/>
</dbReference>
<dbReference type="GO" id="GO:0000786">
    <property type="term" value="C:nucleosome"/>
    <property type="evidence" value="ECO:0007669"/>
    <property type="project" value="UniProtKB-KW"/>
</dbReference>
<dbReference type="GO" id="GO:0005634">
    <property type="term" value="C:nucleus"/>
    <property type="evidence" value="ECO:0007669"/>
    <property type="project" value="UniProtKB-SubCell"/>
</dbReference>
<dbReference type="GO" id="GO:0003677">
    <property type="term" value="F:DNA binding"/>
    <property type="evidence" value="ECO:0007669"/>
    <property type="project" value="UniProtKB-KW"/>
</dbReference>
<dbReference type="GO" id="GO:0046982">
    <property type="term" value="F:protein heterodimerization activity"/>
    <property type="evidence" value="ECO:0007669"/>
    <property type="project" value="InterPro"/>
</dbReference>
<dbReference type="GO" id="GO:0030527">
    <property type="term" value="F:structural constituent of chromatin"/>
    <property type="evidence" value="ECO:0007669"/>
    <property type="project" value="InterPro"/>
</dbReference>
<dbReference type="CDD" id="cd00074">
    <property type="entry name" value="HFD_H2A"/>
    <property type="match status" value="1"/>
</dbReference>
<dbReference type="FunFam" id="1.10.20.10:FF:000126">
    <property type="entry name" value="Histone H2A"/>
    <property type="match status" value="1"/>
</dbReference>
<dbReference type="Gene3D" id="1.10.20.10">
    <property type="entry name" value="Histone, subunit A"/>
    <property type="match status" value="1"/>
</dbReference>
<dbReference type="InterPro" id="IPR009072">
    <property type="entry name" value="Histone-fold"/>
</dbReference>
<dbReference type="InterPro" id="IPR002119">
    <property type="entry name" value="Histone_H2A"/>
</dbReference>
<dbReference type="InterPro" id="IPR007125">
    <property type="entry name" value="Histone_H2A/H2B/H3"/>
</dbReference>
<dbReference type="PANTHER" id="PTHR23430">
    <property type="entry name" value="HISTONE H2A"/>
    <property type="match status" value="1"/>
</dbReference>
<dbReference type="Pfam" id="PF00125">
    <property type="entry name" value="Histone"/>
    <property type="match status" value="1"/>
</dbReference>
<dbReference type="PRINTS" id="PR00620">
    <property type="entry name" value="HISTONEH2A"/>
</dbReference>
<dbReference type="SMART" id="SM00414">
    <property type="entry name" value="H2A"/>
    <property type="match status" value="1"/>
</dbReference>
<dbReference type="SUPFAM" id="SSF47113">
    <property type="entry name" value="Histone-fold"/>
    <property type="match status" value="1"/>
</dbReference>
<accession>Q9T0H7</accession>
<reference key="1">
    <citation type="journal article" date="1999" name="Nature">
        <title>Sequence and analysis of chromosome 4 of the plant Arabidopsis thaliana.</title>
        <authorList>
            <person name="Mayer K.F.X."/>
            <person name="Schueller C."/>
            <person name="Wambutt R."/>
            <person name="Murphy G."/>
            <person name="Volckaert G."/>
            <person name="Pohl T."/>
            <person name="Duesterhoeft A."/>
            <person name="Stiekema W."/>
            <person name="Entian K.-D."/>
            <person name="Terryn N."/>
            <person name="Harris B."/>
            <person name="Ansorge W."/>
            <person name="Brandt P."/>
            <person name="Grivell L.A."/>
            <person name="Rieger M."/>
            <person name="Weichselgartner M."/>
            <person name="de Simone V."/>
            <person name="Obermaier B."/>
            <person name="Mache R."/>
            <person name="Mueller M."/>
            <person name="Kreis M."/>
            <person name="Delseny M."/>
            <person name="Puigdomenech P."/>
            <person name="Watson M."/>
            <person name="Schmidtheini T."/>
            <person name="Reichert B."/>
            <person name="Portetelle D."/>
            <person name="Perez-Alonso M."/>
            <person name="Boutry M."/>
            <person name="Bancroft I."/>
            <person name="Vos P."/>
            <person name="Hoheisel J."/>
            <person name="Zimmermann W."/>
            <person name="Wedler H."/>
            <person name="Ridley P."/>
            <person name="Langham S.-A."/>
            <person name="McCullagh B."/>
            <person name="Bilham L."/>
            <person name="Robben J."/>
            <person name="van der Schueren J."/>
            <person name="Grymonprez B."/>
            <person name="Chuang Y.-J."/>
            <person name="Vandenbussche F."/>
            <person name="Braeken M."/>
            <person name="Weltjens I."/>
            <person name="Voet M."/>
            <person name="Bastiaens I."/>
            <person name="Aert R."/>
            <person name="Defoor E."/>
            <person name="Weitzenegger T."/>
            <person name="Bothe G."/>
            <person name="Ramsperger U."/>
            <person name="Hilbert H."/>
            <person name="Braun M."/>
            <person name="Holzer E."/>
            <person name="Brandt A."/>
            <person name="Peters S."/>
            <person name="van Staveren M."/>
            <person name="Dirkse W."/>
            <person name="Mooijman P."/>
            <person name="Klein Lankhorst R."/>
            <person name="Rose M."/>
            <person name="Hauf J."/>
            <person name="Koetter P."/>
            <person name="Berneiser S."/>
            <person name="Hempel S."/>
            <person name="Feldpausch M."/>
            <person name="Lamberth S."/>
            <person name="Van den Daele H."/>
            <person name="De Keyser A."/>
            <person name="Buysshaert C."/>
            <person name="Gielen J."/>
            <person name="Villarroel R."/>
            <person name="De Clercq R."/>
            <person name="van Montagu M."/>
            <person name="Rogers J."/>
            <person name="Cronin A."/>
            <person name="Quail M.A."/>
            <person name="Bray-Allen S."/>
            <person name="Clark L."/>
            <person name="Doggett J."/>
            <person name="Hall S."/>
            <person name="Kay M."/>
            <person name="Lennard N."/>
            <person name="McLay K."/>
            <person name="Mayes R."/>
            <person name="Pettett A."/>
            <person name="Rajandream M.A."/>
            <person name="Lyne M."/>
            <person name="Benes V."/>
            <person name="Rechmann S."/>
            <person name="Borkova D."/>
            <person name="Bloecker H."/>
            <person name="Scharfe M."/>
            <person name="Grimm M."/>
            <person name="Loehnert T.-H."/>
            <person name="Dose S."/>
            <person name="de Haan M."/>
            <person name="Maarse A.C."/>
            <person name="Schaefer M."/>
            <person name="Mueller-Auer S."/>
            <person name="Gabel C."/>
            <person name="Fuchs M."/>
            <person name="Fartmann B."/>
            <person name="Granderath K."/>
            <person name="Dauner D."/>
            <person name="Herzl A."/>
            <person name="Neumann S."/>
            <person name="Argiriou A."/>
            <person name="Vitale D."/>
            <person name="Liguori R."/>
            <person name="Piravandi E."/>
            <person name="Massenet O."/>
            <person name="Quigley F."/>
            <person name="Clabauld G."/>
            <person name="Muendlein A."/>
            <person name="Felber R."/>
            <person name="Schnabl S."/>
            <person name="Hiller R."/>
            <person name="Schmidt W."/>
            <person name="Lecharny A."/>
            <person name="Aubourg S."/>
            <person name="Chefdor F."/>
            <person name="Cooke R."/>
            <person name="Berger C."/>
            <person name="Monfort A."/>
            <person name="Casacuberta E."/>
            <person name="Gibbons T."/>
            <person name="Weber N."/>
            <person name="Vandenbol M."/>
            <person name="Bargues M."/>
            <person name="Terol J."/>
            <person name="Torres A."/>
            <person name="Perez-Perez A."/>
            <person name="Purnelle B."/>
            <person name="Bent E."/>
            <person name="Johnson S."/>
            <person name="Tacon D."/>
            <person name="Jesse T."/>
            <person name="Heijnen L."/>
            <person name="Schwarz S."/>
            <person name="Scholler P."/>
            <person name="Heber S."/>
            <person name="Francs P."/>
            <person name="Bielke C."/>
            <person name="Frishman D."/>
            <person name="Haase D."/>
            <person name="Lemcke K."/>
            <person name="Mewes H.-W."/>
            <person name="Stocker S."/>
            <person name="Zaccaria P."/>
            <person name="Bevan M."/>
            <person name="Wilson R.K."/>
            <person name="de la Bastide M."/>
            <person name="Habermann K."/>
            <person name="Parnell L."/>
            <person name="Dedhia N."/>
            <person name="Gnoj L."/>
            <person name="Schutz K."/>
            <person name="Huang E."/>
            <person name="Spiegel L."/>
            <person name="Sekhon M."/>
            <person name="Murray J."/>
            <person name="Sheet P."/>
            <person name="Cordes M."/>
            <person name="Abu-Threideh J."/>
            <person name="Stoneking T."/>
            <person name="Kalicki J."/>
            <person name="Graves T."/>
            <person name="Harmon G."/>
            <person name="Edwards J."/>
            <person name="Latreille P."/>
            <person name="Courtney L."/>
            <person name="Cloud J."/>
            <person name="Abbott A."/>
            <person name="Scott K."/>
            <person name="Johnson D."/>
            <person name="Minx P."/>
            <person name="Bentley D."/>
            <person name="Fulton B."/>
            <person name="Miller N."/>
            <person name="Greco T."/>
            <person name="Kemp K."/>
            <person name="Kramer J."/>
            <person name="Fulton L."/>
            <person name="Mardis E."/>
            <person name="Dante M."/>
            <person name="Pepin K."/>
            <person name="Hillier L.W."/>
            <person name="Nelson J."/>
            <person name="Spieth J."/>
            <person name="Ryan E."/>
            <person name="Andrews S."/>
            <person name="Geisel C."/>
            <person name="Layman D."/>
            <person name="Du H."/>
            <person name="Ali J."/>
            <person name="Berghoff A."/>
            <person name="Jones K."/>
            <person name="Drone K."/>
            <person name="Cotton M."/>
            <person name="Joshu C."/>
            <person name="Antonoiu B."/>
            <person name="Zidanic M."/>
            <person name="Strong C."/>
            <person name="Sun H."/>
            <person name="Lamar B."/>
            <person name="Yordan C."/>
            <person name="Ma P."/>
            <person name="Zhong J."/>
            <person name="Preston R."/>
            <person name="Vil D."/>
            <person name="Shekher M."/>
            <person name="Matero A."/>
            <person name="Shah R."/>
            <person name="Swaby I.K."/>
            <person name="O'Shaughnessy A."/>
            <person name="Rodriguez M."/>
            <person name="Hoffman J."/>
            <person name="Till S."/>
            <person name="Granat S."/>
            <person name="Shohdy N."/>
            <person name="Hasegawa A."/>
            <person name="Hameed A."/>
            <person name="Lodhi M."/>
            <person name="Johnson A."/>
            <person name="Chen E."/>
            <person name="Marra M.A."/>
            <person name="Martienssen R."/>
            <person name="McCombie W.R."/>
        </authorList>
    </citation>
    <scope>NUCLEOTIDE SEQUENCE [LARGE SCALE GENOMIC DNA]</scope>
    <source>
        <strain>cv. Columbia</strain>
    </source>
</reference>
<reference key="2">
    <citation type="journal article" date="2017" name="Plant J.">
        <title>Araport11: a complete reannotation of the Arabidopsis thaliana reference genome.</title>
        <authorList>
            <person name="Cheng C.Y."/>
            <person name="Krishnakumar V."/>
            <person name="Chan A.P."/>
            <person name="Thibaud-Nissen F."/>
            <person name="Schobel S."/>
            <person name="Town C.D."/>
        </authorList>
    </citation>
    <scope>GENOME REANNOTATION</scope>
    <source>
        <strain>cv. Columbia</strain>
    </source>
</reference>
<reference key="3">
    <citation type="journal article" date="2006" name="Plant Cell">
        <title>Constitutive expression exposes functional redundancy between the Arabidopsis histone H2A gene HTA1 and other H2A gene family members.</title>
        <authorList>
            <person name="Yi H."/>
            <person name="Sardesai N."/>
            <person name="Fujinuma T."/>
            <person name="Chan C.-W."/>
            <person name="Veena X."/>
            <person name="Gelvin S.B."/>
        </authorList>
    </citation>
    <scope>TISSUE SPECIFICITY</scope>
    <scope>NOMENCLATURE</scope>
</reference>
<reference key="4">
    <citation type="journal article" date="2007" name="Nature">
        <title>Control of DNA methylation and heterochromatic silencing by histone H2B deubiquitination.</title>
        <authorList>
            <person name="Sridhar V.V."/>
            <person name="Kapoor A."/>
            <person name="Zhang K."/>
            <person name="Zhu J."/>
            <person name="Zhou T."/>
            <person name="Hasegawa P.M."/>
            <person name="Bressan R.A."/>
            <person name="Zhu J.-K."/>
        </authorList>
    </citation>
    <scope>LACK OF UBIQUITINATION</scope>
    <scope>IDENTIFICATION BY MASS SPECTROMETRY</scope>
</reference>
<feature type="chain" id="PRO_0000244626" description="Histone H2A.8">
    <location>
        <begin position="1"/>
        <end position="118"/>
    </location>
</feature>
<protein>
    <recommendedName>
        <fullName>Histone H2A.8</fullName>
    </recommendedName>
    <alternativeName>
        <fullName>H2A-4</fullName>
    </alternativeName>
    <alternativeName>
        <fullName>HTA4</fullName>
    </alternativeName>
</protein>
<gene>
    <name type="ordered locus">At4g13570</name>
    <name type="ORF">T6G15.120</name>
</gene>
<evidence type="ECO:0000250" key="1"/>
<evidence type="ECO:0000269" key="2">
    <source>
    </source>
</evidence>
<evidence type="ECO:0000305" key="3"/>
<sequence length="118" mass="13200">MVCNTNILKDVSTKISAFENVRMIMVEGEMFQVARIHKQLKNRVSAHSSVGATDVVYMTSILEYLTTEVLQLAENTSKDLKVKRITPRHLQLAIRGDEELDTLIKGTIIGGSVIPHIH</sequence>
<keyword id="KW-0025">Alternative splicing</keyword>
<keyword id="KW-0158">Chromosome</keyword>
<keyword id="KW-0238">DNA-binding</keyword>
<keyword id="KW-0544">Nucleosome core</keyword>
<keyword id="KW-0539">Nucleus</keyword>
<keyword id="KW-1185">Reference proteome</keyword>
<name>H2A8_ARATH</name>
<organism>
    <name type="scientific">Arabidopsis thaliana</name>
    <name type="common">Mouse-ear cress</name>
    <dbReference type="NCBI Taxonomy" id="3702"/>
    <lineage>
        <taxon>Eukaryota</taxon>
        <taxon>Viridiplantae</taxon>
        <taxon>Streptophyta</taxon>
        <taxon>Embryophyta</taxon>
        <taxon>Tracheophyta</taxon>
        <taxon>Spermatophyta</taxon>
        <taxon>Magnoliopsida</taxon>
        <taxon>eudicotyledons</taxon>
        <taxon>Gunneridae</taxon>
        <taxon>Pentapetalae</taxon>
        <taxon>rosids</taxon>
        <taxon>malvids</taxon>
        <taxon>Brassicales</taxon>
        <taxon>Brassicaceae</taxon>
        <taxon>Camelineae</taxon>
        <taxon>Arabidopsis</taxon>
    </lineage>
</organism>
<comment type="function">
    <text>Core component of nucleosome. Nucleosomes wrap and compact DNA into chromatin, limiting DNA accessibility to the cellular machineries which require DNA as a template. Histones thereby play a central role in transcription regulation, DNA repair, DNA replication and chromosomal stability. DNA accessibility is regulated via a complex set of post-translational modifications of histones, also called histone code, and nucleosome remodeling.</text>
</comment>
<comment type="subunit">
    <text>The nucleosome is a histone octamer containing two molecules each of H2A, H2B, H3 and H4 assembled in one H3-H4 heterotetramer and two H2A-H2B heterodimers. The octamer wraps approximately 147 bp of DNA.</text>
</comment>
<comment type="subcellular location">
    <subcellularLocation>
        <location evidence="1">Nucleus</location>
    </subcellularLocation>
    <subcellularLocation>
        <location evidence="1">Chromosome</location>
    </subcellularLocation>
</comment>
<comment type="alternative products">
    <event type="alternative splicing"/>
    <isoform>
        <id>Q9T0H7-1</id>
        <name>1</name>
        <sequence type="displayed"/>
    </isoform>
    <text>A number of isoforms are produced. According to EST sequences.</text>
</comment>
<comment type="tissue specificity">
    <text evidence="2">Not detected by RT-PCR, but promoter weakly active at the margins of leaves and in the root apical and elongation zones.</text>
</comment>
<comment type="PTM">
    <text>Not ubiquitinated.</text>
</comment>
<comment type="similarity">
    <text evidence="3">Belongs to the histone H2A family.</text>
</comment>
<proteinExistence type="evidence at protein level"/>